<accession>Q5LN74</accession>
<keyword id="KW-0001">2Fe-2S</keyword>
<keyword id="KW-0004">4Fe-4S</keyword>
<keyword id="KW-0093">Biotin biosynthesis</keyword>
<keyword id="KW-0408">Iron</keyword>
<keyword id="KW-0411">Iron-sulfur</keyword>
<keyword id="KW-0479">Metal-binding</keyword>
<keyword id="KW-1185">Reference proteome</keyword>
<keyword id="KW-0949">S-adenosyl-L-methionine</keyword>
<keyword id="KW-0808">Transferase</keyword>
<reference key="1">
    <citation type="journal article" date="2004" name="Nature">
        <title>Genome sequence of Silicibacter pomeroyi reveals adaptations to the marine environment.</title>
        <authorList>
            <person name="Moran M.A."/>
            <person name="Buchan A."/>
            <person name="Gonzalez J.M."/>
            <person name="Heidelberg J.F."/>
            <person name="Whitman W.B."/>
            <person name="Kiene R.P."/>
            <person name="Henriksen J.R."/>
            <person name="King G.M."/>
            <person name="Belas R."/>
            <person name="Fuqua C."/>
            <person name="Brinkac L.M."/>
            <person name="Lewis M."/>
            <person name="Johri S."/>
            <person name="Weaver B."/>
            <person name="Pai G."/>
            <person name="Eisen J.A."/>
            <person name="Rahe E."/>
            <person name="Sheldon W.M."/>
            <person name="Ye W."/>
            <person name="Miller T.R."/>
            <person name="Carlton J."/>
            <person name="Rasko D.A."/>
            <person name="Paulsen I.T."/>
            <person name="Ren Q."/>
            <person name="Daugherty S.C."/>
            <person name="DeBoy R.T."/>
            <person name="Dodson R.J."/>
            <person name="Durkin A.S."/>
            <person name="Madupu R."/>
            <person name="Nelson W.C."/>
            <person name="Sullivan S.A."/>
            <person name="Rosovitz M.J."/>
            <person name="Haft D.H."/>
            <person name="Selengut J."/>
            <person name="Ward N."/>
        </authorList>
    </citation>
    <scope>NUCLEOTIDE SEQUENCE [LARGE SCALE GENOMIC DNA]</scope>
    <source>
        <strain>ATCC 700808 / DSM 15171 / DSS-3</strain>
    </source>
</reference>
<reference key="2">
    <citation type="journal article" date="2014" name="Stand. Genomic Sci.">
        <title>An updated genome annotation for the model marine bacterium Ruegeria pomeroyi DSS-3.</title>
        <authorList>
            <person name="Rivers A.R."/>
            <person name="Smith C.B."/>
            <person name="Moran M.A."/>
        </authorList>
    </citation>
    <scope>GENOME REANNOTATION</scope>
    <source>
        <strain>ATCC 700808 / DSM 15171 / DSS-3</strain>
    </source>
</reference>
<gene>
    <name evidence="1" type="primary">bioB</name>
    <name type="ordered locus">SPO3338</name>
</gene>
<sequence length="318" mass="34397">MAEAIRSDWSVDEVEALLRLPLLDLVGRANGVHRAHHAPDDIQKASLLSIKTGGCPEDCAYCPQSAHHREVELTREKLMNPDHVVSLARRAQRAGAERFCMGAAWRQVRDGAEFDNVLAMVRGVRALGMEACVTLGMLRPHQAQRLAEAGLTAYNHNLDTSPEFYGQIIGTRTYQDRLDTLAYCRDAGIELCCGGIIGMGESLRDRAAMLQVLANFAPHPESVPINALIPIEGTPLAHRERVGIFDLVRMVATARIIMPLTRVRLSAGRSDFSAAEQALCFLAGANSVFYGDVLLTAPNAGTGADAELFAALGALETA</sequence>
<protein>
    <recommendedName>
        <fullName evidence="1">Biotin synthase</fullName>
        <ecNumber evidence="1">2.8.1.6</ecNumber>
    </recommendedName>
</protein>
<proteinExistence type="inferred from homology"/>
<comment type="function">
    <text evidence="1">Catalyzes the conversion of dethiobiotin (DTB) to biotin by the insertion of a sulfur atom into dethiobiotin via a radical-based mechanism.</text>
</comment>
<comment type="catalytic activity">
    <reaction evidence="1">
        <text>(4R,5S)-dethiobiotin + (sulfur carrier)-SH + 2 reduced [2Fe-2S]-[ferredoxin] + 2 S-adenosyl-L-methionine = (sulfur carrier)-H + biotin + 2 5'-deoxyadenosine + 2 L-methionine + 2 oxidized [2Fe-2S]-[ferredoxin]</text>
        <dbReference type="Rhea" id="RHEA:22060"/>
        <dbReference type="Rhea" id="RHEA-COMP:10000"/>
        <dbReference type="Rhea" id="RHEA-COMP:10001"/>
        <dbReference type="Rhea" id="RHEA-COMP:14737"/>
        <dbReference type="Rhea" id="RHEA-COMP:14739"/>
        <dbReference type="ChEBI" id="CHEBI:17319"/>
        <dbReference type="ChEBI" id="CHEBI:29917"/>
        <dbReference type="ChEBI" id="CHEBI:33737"/>
        <dbReference type="ChEBI" id="CHEBI:33738"/>
        <dbReference type="ChEBI" id="CHEBI:57586"/>
        <dbReference type="ChEBI" id="CHEBI:57844"/>
        <dbReference type="ChEBI" id="CHEBI:59789"/>
        <dbReference type="ChEBI" id="CHEBI:64428"/>
        <dbReference type="ChEBI" id="CHEBI:149473"/>
        <dbReference type="EC" id="2.8.1.6"/>
    </reaction>
</comment>
<comment type="cofactor">
    <cofactor evidence="1">
        <name>[4Fe-4S] cluster</name>
        <dbReference type="ChEBI" id="CHEBI:49883"/>
    </cofactor>
    <text evidence="1">Binds 1 [4Fe-4S] cluster. The cluster is coordinated with 3 cysteines and an exchangeable S-adenosyl-L-methionine.</text>
</comment>
<comment type="cofactor">
    <cofactor evidence="1">
        <name>[2Fe-2S] cluster</name>
        <dbReference type="ChEBI" id="CHEBI:190135"/>
    </cofactor>
    <text evidence="1">Binds 1 [2Fe-2S] cluster. The cluster is coordinated with 3 cysteines and 1 arginine.</text>
</comment>
<comment type="pathway">
    <text evidence="1">Cofactor biosynthesis; biotin biosynthesis; biotin from 7,8-diaminononanoate: step 2/2.</text>
</comment>
<comment type="subunit">
    <text evidence="1">Homodimer.</text>
</comment>
<comment type="similarity">
    <text evidence="1">Belongs to the radical SAM superfamily. Biotin synthase family.</text>
</comment>
<feature type="chain" id="PRO_0000381637" description="Biotin synthase">
    <location>
        <begin position="1"/>
        <end position="318"/>
    </location>
</feature>
<feature type="domain" description="Radical SAM core" evidence="2">
    <location>
        <begin position="40"/>
        <end position="260"/>
    </location>
</feature>
<feature type="binding site" evidence="1">
    <location>
        <position position="55"/>
    </location>
    <ligand>
        <name>[4Fe-4S] cluster</name>
        <dbReference type="ChEBI" id="CHEBI:49883"/>
        <note>4Fe-4S-S-AdoMet</note>
    </ligand>
</feature>
<feature type="binding site" evidence="1">
    <location>
        <position position="59"/>
    </location>
    <ligand>
        <name>[4Fe-4S] cluster</name>
        <dbReference type="ChEBI" id="CHEBI:49883"/>
        <note>4Fe-4S-S-AdoMet</note>
    </ligand>
</feature>
<feature type="binding site" evidence="1">
    <location>
        <position position="62"/>
    </location>
    <ligand>
        <name>[4Fe-4S] cluster</name>
        <dbReference type="ChEBI" id="CHEBI:49883"/>
        <note>4Fe-4S-S-AdoMet</note>
    </ligand>
</feature>
<feature type="binding site" evidence="1">
    <location>
        <position position="100"/>
    </location>
    <ligand>
        <name>[2Fe-2S] cluster</name>
        <dbReference type="ChEBI" id="CHEBI:190135"/>
    </ligand>
</feature>
<feature type="binding site" evidence="1">
    <location>
        <position position="132"/>
    </location>
    <ligand>
        <name>[2Fe-2S] cluster</name>
        <dbReference type="ChEBI" id="CHEBI:190135"/>
    </ligand>
</feature>
<feature type="binding site" evidence="1">
    <location>
        <position position="192"/>
    </location>
    <ligand>
        <name>[2Fe-2S] cluster</name>
        <dbReference type="ChEBI" id="CHEBI:190135"/>
    </ligand>
</feature>
<feature type="binding site" evidence="1">
    <location>
        <position position="264"/>
    </location>
    <ligand>
        <name>[2Fe-2S] cluster</name>
        <dbReference type="ChEBI" id="CHEBI:190135"/>
    </ligand>
</feature>
<name>BIOB_RUEPO</name>
<evidence type="ECO:0000255" key="1">
    <source>
        <dbReference type="HAMAP-Rule" id="MF_01694"/>
    </source>
</evidence>
<evidence type="ECO:0000255" key="2">
    <source>
        <dbReference type="PROSITE-ProRule" id="PRU01266"/>
    </source>
</evidence>
<dbReference type="EC" id="2.8.1.6" evidence="1"/>
<dbReference type="EMBL" id="CP000031">
    <property type="protein sequence ID" value="AAV96565.1"/>
    <property type="molecule type" value="Genomic_DNA"/>
</dbReference>
<dbReference type="RefSeq" id="WP_011049021.1">
    <property type="nucleotide sequence ID" value="NC_003911.12"/>
</dbReference>
<dbReference type="SMR" id="Q5LN74"/>
<dbReference type="STRING" id="246200.SPO3338"/>
<dbReference type="PaxDb" id="246200-SPO3338"/>
<dbReference type="KEGG" id="sil:SPO3338"/>
<dbReference type="eggNOG" id="COG0502">
    <property type="taxonomic scope" value="Bacteria"/>
</dbReference>
<dbReference type="HOGENOM" id="CLU_033172_1_2_5"/>
<dbReference type="OrthoDB" id="9786826at2"/>
<dbReference type="UniPathway" id="UPA00078">
    <property type="reaction ID" value="UER00162"/>
</dbReference>
<dbReference type="Proteomes" id="UP000001023">
    <property type="component" value="Chromosome"/>
</dbReference>
<dbReference type="GO" id="GO:0051537">
    <property type="term" value="F:2 iron, 2 sulfur cluster binding"/>
    <property type="evidence" value="ECO:0007669"/>
    <property type="project" value="UniProtKB-KW"/>
</dbReference>
<dbReference type="GO" id="GO:0051539">
    <property type="term" value="F:4 iron, 4 sulfur cluster binding"/>
    <property type="evidence" value="ECO:0007669"/>
    <property type="project" value="UniProtKB-KW"/>
</dbReference>
<dbReference type="GO" id="GO:0004076">
    <property type="term" value="F:biotin synthase activity"/>
    <property type="evidence" value="ECO:0007669"/>
    <property type="project" value="UniProtKB-UniRule"/>
</dbReference>
<dbReference type="GO" id="GO:0005506">
    <property type="term" value="F:iron ion binding"/>
    <property type="evidence" value="ECO:0007669"/>
    <property type="project" value="UniProtKB-UniRule"/>
</dbReference>
<dbReference type="GO" id="GO:0009102">
    <property type="term" value="P:biotin biosynthetic process"/>
    <property type="evidence" value="ECO:0007669"/>
    <property type="project" value="UniProtKB-UniRule"/>
</dbReference>
<dbReference type="CDD" id="cd01335">
    <property type="entry name" value="Radical_SAM"/>
    <property type="match status" value="1"/>
</dbReference>
<dbReference type="Gene3D" id="3.20.20.70">
    <property type="entry name" value="Aldolase class I"/>
    <property type="match status" value="1"/>
</dbReference>
<dbReference type="HAMAP" id="MF_01694">
    <property type="entry name" value="BioB"/>
    <property type="match status" value="1"/>
</dbReference>
<dbReference type="InterPro" id="IPR013785">
    <property type="entry name" value="Aldolase_TIM"/>
</dbReference>
<dbReference type="InterPro" id="IPR010722">
    <property type="entry name" value="BATS_dom"/>
</dbReference>
<dbReference type="InterPro" id="IPR002684">
    <property type="entry name" value="Biotin_synth/BioAB"/>
</dbReference>
<dbReference type="InterPro" id="IPR024177">
    <property type="entry name" value="Biotin_synthase"/>
</dbReference>
<dbReference type="InterPro" id="IPR006638">
    <property type="entry name" value="Elp3/MiaA/NifB-like_rSAM"/>
</dbReference>
<dbReference type="InterPro" id="IPR007197">
    <property type="entry name" value="rSAM"/>
</dbReference>
<dbReference type="NCBIfam" id="TIGR00433">
    <property type="entry name" value="bioB"/>
    <property type="match status" value="1"/>
</dbReference>
<dbReference type="PANTHER" id="PTHR22976">
    <property type="entry name" value="BIOTIN SYNTHASE"/>
    <property type="match status" value="1"/>
</dbReference>
<dbReference type="PANTHER" id="PTHR22976:SF2">
    <property type="entry name" value="BIOTIN SYNTHASE, MITOCHONDRIAL"/>
    <property type="match status" value="1"/>
</dbReference>
<dbReference type="Pfam" id="PF06968">
    <property type="entry name" value="BATS"/>
    <property type="match status" value="1"/>
</dbReference>
<dbReference type="Pfam" id="PF04055">
    <property type="entry name" value="Radical_SAM"/>
    <property type="match status" value="1"/>
</dbReference>
<dbReference type="PIRSF" id="PIRSF001619">
    <property type="entry name" value="Biotin_synth"/>
    <property type="match status" value="1"/>
</dbReference>
<dbReference type="SFLD" id="SFLDF00272">
    <property type="entry name" value="biotin_synthase"/>
    <property type="match status" value="1"/>
</dbReference>
<dbReference type="SFLD" id="SFLDG01278">
    <property type="entry name" value="biotin_synthase_like"/>
    <property type="match status" value="1"/>
</dbReference>
<dbReference type="SMART" id="SM00876">
    <property type="entry name" value="BATS"/>
    <property type="match status" value="1"/>
</dbReference>
<dbReference type="SMART" id="SM00729">
    <property type="entry name" value="Elp3"/>
    <property type="match status" value="1"/>
</dbReference>
<dbReference type="SUPFAM" id="SSF102114">
    <property type="entry name" value="Radical SAM enzymes"/>
    <property type="match status" value="1"/>
</dbReference>
<dbReference type="PROSITE" id="PS51918">
    <property type="entry name" value="RADICAL_SAM"/>
    <property type="match status" value="1"/>
</dbReference>
<organism>
    <name type="scientific">Ruegeria pomeroyi (strain ATCC 700808 / DSM 15171 / DSS-3)</name>
    <name type="common">Silicibacter pomeroyi</name>
    <dbReference type="NCBI Taxonomy" id="246200"/>
    <lineage>
        <taxon>Bacteria</taxon>
        <taxon>Pseudomonadati</taxon>
        <taxon>Pseudomonadota</taxon>
        <taxon>Alphaproteobacteria</taxon>
        <taxon>Rhodobacterales</taxon>
        <taxon>Roseobacteraceae</taxon>
        <taxon>Ruegeria</taxon>
    </lineage>
</organism>